<name>PYRB_BRADU</name>
<feature type="chain" id="PRO_0000113107" description="Aspartate carbamoyltransferase catalytic subunit">
    <location>
        <begin position="1"/>
        <end position="315"/>
    </location>
</feature>
<feature type="binding site" evidence="1">
    <location>
        <position position="64"/>
    </location>
    <ligand>
        <name>carbamoyl phosphate</name>
        <dbReference type="ChEBI" id="CHEBI:58228"/>
    </ligand>
</feature>
<feature type="binding site" evidence="1">
    <location>
        <position position="65"/>
    </location>
    <ligand>
        <name>carbamoyl phosphate</name>
        <dbReference type="ChEBI" id="CHEBI:58228"/>
    </ligand>
</feature>
<feature type="binding site" evidence="1">
    <location>
        <position position="92"/>
    </location>
    <ligand>
        <name>L-aspartate</name>
        <dbReference type="ChEBI" id="CHEBI:29991"/>
    </ligand>
</feature>
<feature type="binding site" evidence="1">
    <location>
        <position position="114"/>
    </location>
    <ligand>
        <name>carbamoyl phosphate</name>
        <dbReference type="ChEBI" id="CHEBI:58228"/>
    </ligand>
</feature>
<feature type="binding site" evidence="1">
    <location>
        <position position="142"/>
    </location>
    <ligand>
        <name>carbamoyl phosphate</name>
        <dbReference type="ChEBI" id="CHEBI:58228"/>
    </ligand>
</feature>
<feature type="binding site" evidence="1">
    <location>
        <position position="145"/>
    </location>
    <ligand>
        <name>carbamoyl phosphate</name>
        <dbReference type="ChEBI" id="CHEBI:58228"/>
    </ligand>
</feature>
<feature type="binding site" evidence="1">
    <location>
        <position position="175"/>
    </location>
    <ligand>
        <name>L-aspartate</name>
        <dbReference type="ChEBI" id="CHEBI:29991"/>
    </ligand>
</feature>
<feature type="binding site" evidence="1">
    <location>
        <position position="229"/>
    </location>
    <ligand>
        <name>L-aspartate</name>
        <dbReference type="ChEBI" id="CHEBI:29991"/>
    </ligand>
</feature>
<feature type="binding site" evidence="1">
    <location>
        <position position="270"/>
    </location>
    <ligand>
        <name>carbamoyl phosphate</name>
        <dbReference type="ChEBI" id="CHEBI:58228"/>
    </ligand>
</feature>
<feature type="binding site" evidence="1">
    <location>
        <position position="271"/>
    </location>
    <ligand>
        <name>carbamoyl phosphate</name>
        <dbReference type="ChEBI" id="CHEBI:58228"/>
    </ligand>
</feature>
<gene>
    <name evidence="1" type="primary">pyrB</name>
    <name type="ordered locus">blr5099</name>
</gene>
<proteinExistence type="inferred from homology"/>
<comment type="function">
    <text evidence="1">Catalyzes the condensation of carbamoyl phosphate and aspartate to form carbamoyl aspartate and inorganic phosphate, the committed step in the de novo pyrimidine nucleotide biosynthesis pathway.</text>
</comment>
<comment type="catalytic activity">
    <reaction evidence="1">
        <text>carbamoyl phosphate + L-aspartate = N-carbamoyl-L-aspartate + phosphate + H(+)</text>
        <dbReference type="Rhea" id="RHEA:20013"/>
        <dbReference type="ChEBI" id="CHEBI:15378"/>
        <dbReference type="ChEBI" id="CHEBI:29991"/>
        <dbReference type="ChEBI" id="CHEBI:32814"/>
        <dbReference type="ChEBI" id="CHEBI:43474"/>
        <dbReference type="ChEBI" id="CHEBI:58228"/>
        <dbReference type="EC" id="2.1.3.2"/>
    </reaction>
</comment>
<comment type="pathway">
    <text evidence="1">Pyrimidine metabolism; UMP biosynthesis via de novo pathway; (S)-dihydroorotate from bicarbonate: step 2/3.</text>
</comment>
<comment type="subunit">
    <text evidence="1">Heterododecamer (2C3:3R2) of six catalytic PyrB chains organized as two trimers (C3), and six regulatory PyrI chains organized as three dimers (R2).</text>
</comment>
<comment type="similarity">
    <text evidence="1">Belongs to the aspartate/ornithine carbamoyltransferase superfamily. ATCase family.</text>
</comment>
<protein>
    <recommendedName>
        <fullName evidence="1">Aspartate carbamoyltransferase catalytic subunit</fullName>
        <ecNumber evidence="1">2.1.3.2</ecNumber>
    </recommendedName>
    <alternativeName>
        <fullName evidence="1">Aspartate transcarbamylase</fullName>
        <shortName evidence="1">ATCase</shortName>
    </alternativeName>
</protein>
<evidence type="ECO:0000255" key="1">
    <source>
        <dbReference type="HAMAP-Rule" id="MF_00001"/>
    </source>
</evidence>
<organism>
    <name type="scientific">Bradyrhizobium diazoefficiens (strain JCM 10833 / BCRC 13528 / IAM 13628 / NBRC 14792 / USDA 110)</name>
    <dbReference type="NCBI Taxonomy" id="224911"/>
    <lineage>
        <taxon>Bacteria</taxon>
        <taxon>Pseudomonadati</taxon>
        <taxon>Pseudomonadota</taxon>
        <taxon>Alphaproteobacteria</taxon>
        <taxon>Hyphomicrobiales</taxon>
        <taxon>Nitrobacteraceae</taxon>
        <taxon>Bradyrhizobium</taxon>
    </lineage>
</organism>
<sequence length="315" mass="34201">MTSKSTFVLGHRHLLGIEGLSAADITGLLDLSEEYVELNRQVDKKRTVLRGRTQVNLFFEASTRTQSSFELAGKRLGADVMNMSVSSSSIKKGETLVDTAMTLNAMHPDILVVRHHASGAVELLARKVDGSVINAGDGAHEHPTQALLDALTIRRNKGRIEGLVVAICGDVLHSRVARSNIILLNTMGARVRVVGPSTLLPPGIERMGVEVARDMREGLNGADIVMMLRLQRERMNGSFVPSTSEYFNYFGLDQKKLGYAKPDALVMHPGPMNRGVEIDTAVADGAQSLIREQVEMGVAVRMAVLEALARNLPNA</sequence>
<reference key="1">
    <citation type="journal article" date="2002" name="DNA Res.">
        <title>Complete genomic sequence of nitrogen-fixing symbiotic bacterium Bradyrhizobium japonicum USDA110.</title>
        <authorList>
            <person name="Kaneko T."/>
            <person name="Nakamura Y."/>
            <person name="Sato S."/>
            <person name="Minamisawa K."/>
            <person name="Uchiumi T."/>
            <person name="Sasamoto S."/>
            <person name="Watanabe A."/>
            <person name="Idesawa K."/>
            <person name="Iriguchi M."/>
            <person name="Kawashima K."/>
            <person name="Kohara M."/>
            <person name="Matsumoto M."/>
            <person name="Shimpo S."/>
            <person name="Tsuruoka H."/>
            <person name="Wada T."/>
            <person name="Yamada M."/>
            <person name="Tabata S."/>
        </authorList>
    </citation>
    <scope>NUCLEOTIDE SEQUENCE [LARGE SCALE GENOMIC DNA]</scope>
    <source>
        <strain>JCM 10833 / BCRC 13528 / IAM 13628 / NBRC 14792 / USDA 110</strain>
    </source>
</reference>
<dbReference type="EC" id="2.1.3.2" evidence="1"/>
<dbReference type="EMBL" id="BA000040">
    <property type="protein sequence ID" value="BAC50364.1"/>
    <property type="molecule type" value="Genomic_DNA"/>
</dbReference>
<dbReference type="RefSeq" id="NP_771739.1">
    <property type="nucleotide sequence ID" value="NC_004463.1"/>
</dbReference>
<dbReference type="RefSeq" id="WP_011087859.1">
    <property type="nucleotide sequence ID" value="NC_004463.1"/>
</dbReference>
<dbReference type="SMR" id="Q89K19"/>
<dbReference type="FunCoup" id="Q89K19">
    <property type="interactions" value="693"/>
</dbReference>
<dbReference type="STRING" id="224911.AAV28_22865"/>
<dbReference type="EnsemblBacteria" id="BAC50364">
    <property type="protein sequence ID" value="BAC50364"/>
    <property type="gene ID" value="BAC50364"/>
</dbReference>
<dbReference type="GeneID" id="46492105"/>
<dbReference type="KEGG" id="bja:blr5099"/>
<dbReference type="PATRIC" id="fig|224911.44.peg.4968"/>
<dbReference type="eggNOG" id="COG0540">
    <property type="taxonomic scope" value="Bacteria"/>
</dbReference>
<dbReference type="HOGENOM" id="CLU_043846_2_0_5"/>
<dbReference type="InParanoid" id="Q89K19"/>
<dbReference type="OrthoDB" id="9774690at2"/>
<dbReference type="PhylomeDB" id="Q89K19"/>
<dbReference type="UniPathway" id="UPA00070">
    <property type="reaction ID" value="UER00116"/>
</dbReference>
<dbReference type="Proteomes" id="UP000002526">
    <property type="component" value="Chromosome"/>
</dbReference>
<dbReference type="GO" id="GO:0016597">
    <property type="term" value="F:amino acid binding"/>
    <property type="evidence" value="ECO:0007669"/>
    <property type="project" value="InterPro"/>
</dbReference>
<dbReference type="GO" id="GO:0004070">
    <property type="term" value="F:aspartate carbamoyltransferase activity"/>
    <property type="evidence" value="ECO:0007669"/>
    <property type="project" value="UniProtKB-UniRule"/>
</dbReference>
<dbReference type="GO" id="GO:0006207">
    <property type="term" value="P:'de novo' pyrimidine nucleobase biosynthetic process"/>
    <property type="evidence" value="ECO:0007669"/>
    <property type="project" value="InterPro"/>
</dbReference>
<dbReference type="GO" id="GO:0044205">
    <property type="term" value="P:'de novo' UMP biosynthetic process"/>
    <property type="evidence" value="ECO:0007669"/>
    <property type="project" value="UniProtKB-UniRule"/>
</dbReference>
<dbReference type="GO" id="GO:0006520">
    <property type="term" value="P:amino acid metabolic process"/>
    <property type="evidence" value="ECO:0007669"/>
    <property type="project" value="InterPro"/>
</dbReference>
<dbReference type="FunFam" id="3.40.50.1370:FF:000007">
    <property type="entry name" value="Aspartate carbamoyltransferase"/>
    <property type="match status" value="1"/>
</dbReference>
<dbReference type="Gene3D" id="3.40.50.1370">
    <property type="entry name" value="Aspartate/ornithine carbamoyltransferase"/>
    <property type="match status" value="2"/>
</dbReference>
<dbReference type="HAMAP" id="MF_00001">
    <property type="entry name" value="Asp_carb_tr"/>
    <property type="match status" value="1"/>
</dbReference>
<dbReference type="InterPro" id="IPR006132">
    <property type="entry name" value="Asp/Orn_carbamoyltranf_P-bd"/>
</dbReference>
<dbReference type="InterPro" id="IPR006130">
    <property type="entry name" value="Asp/Orn_carbamoylTrfase"/>
</dbReference>
<dbReference type="InterPro" id="IPR036901">
    <property type="entry name" value="Asp/Orn_carbamoylTrfase_sf"/>
</dbReference>
<dbReference type="InterPro" id="IPR002082">
    <property type="entry name" value="Asp_carbamoyltransf"/>
</dbReference>
<dbReference type="InterPro" id="IPR006131">
    <property type="entry name" value="Asp_carbamoyltransf_Asp/Orn-bd"/>
</dbReference>
<dbReference type="NCBIfam" id="TIGR00670">
    <property type="entry name" value="asp_carb_tr"/>
    <property type="match status" value="1"/>
</dbReference>
<dbReference type="NCBIfam" id="NF002032">
    <property type="entry name" value="PRK00856.1"/>
    <property type="match status" value="1"/>
</dbReference>
<dbReference type="PANTHER" id="PTHR45753:SF6">
    <property type="entry name" value="ASPARTATE CARBAMOYLTRANSFERASE"/>
    <property type="match status" value="1"/>
</dbReference>
<dbReference type="PANTHER" id="PTHR45753">
    <property type="entry name" value="ORNITHINE CARBAMOYLTRANSFERASE, MITOCHONDRIAL"/>
    <property type="match status" value="1"/>
</dbReference>
<dbReference type="Pfam" id="PF00185">
    <property type="entry name" value="OTCace"/>
    <property type="match status" value="1"/>
</dbReference>
<dbReference type="Pfam" id="PF02729">
    <property type="entry name" value="OTCace_N"/>
    <property type="match status" value="1"/>
</dbReference>
<dbReference type="PRINTS" id="PR00100">
    <property type="entry name" value="AOTCASE"/>
</dbReference>
<dbReference type="PRINTS" id="PR00101">
    <property type="entry name" value="ATCASE"/>
</dbReference>
<dbReference type="SUPFAM" id="SSF53671">
    <property type="entry name" value="Aspartate/ornithine carbamoyltransferase"/>
    <property type="match status" value="1"/>
</dbReference>
<dbReference type="PROSITE" id="PS00097">
    <property type="entry name" value="CARBAMOYLTRANSFERASE"/>
    <property type="match status" value="1"/>
</dbReference>
<keyword id="KW-0665">Pyrimidine biosynthesis</keyword>
<keyword id="KW-1185">Reference proteome</keyword>
<keyword id="KW-0808">Transferase</keyword>
<accession>Q89K19</accession>